<feature type="chain" id="PRO_0000095700" description="N-acetylmannosamine kinase">
    <location>
        <begin position="1"/>
        <end position="297"/>
    </location>
</feature>
<feature type="binding site" evidence="1">
    <location>
        <begin position="5"/>
        <end position="12"/>
    </location>
    <ligand>
        <name>ATP</name>
        <dbReference type="ChEBI" id="CHEBI:30616"/>
    </ligand>
</feature>
<feature type="binding site" evidence="1">
    <location>
        <begin position="132"/>
        <end position="139"/>
    </location>
    <ligand>
        <name>ATP</name>
        <dbReference type="ChEBI" id="CHEBI:30616"/>
    </ligand>
</feature>
<feature type="binding site" evidence="1">
    <location>
        <position position="156"/>
    </location>
    <ligand>
        <name>Zn(2+)</name>
        <dbReference type="ChEBI" id="CHEBI:29105"/>
    </ligand>
</feature>
<feature type="binding site" evidence="1">
    <location>
        <position position="166"/>
    </location>
    <ligand>
        <name>Zn(2+)</name>
        <dbReference type="ChEBI" id="CHEBI:29105"/>
    </ligand>
</feature>
<feature type="binding site" evidence="1">
    <location>
        <position position="168"/>
    </location>
    <ligand>
        <name>Zn(2+)</name>
        <dbReference type="ChEBI" id="CHEBI:29105"/>
    </ligand>
</feature>
<feature type="binding site" evidence="1">
    <location>
        <position position="173"/>
    </location>
    <ligand>
        <name>Zn(2+)</name>
        <dbReference type="ChEBI" id="CHEBI:29105"/>
    </ligand>
</feature>
<feature type="strand" evidence="3">
    <location>
        <begin position="2"/>
        <end position="8"/>
    </location>
</feature>
<feature type="strand" evidence="3">
    <location>
        <begin position="10"/>
        <end position="19"/>
    </location>
</feature>
<feature type="strand" evidence="3">
    <location>
        <begin position="22"/>
        <end position="30"/>
    </location>
</feature>
<feature type="helix" evidence="3">
    <location>
        <begin position="36"/>
        <end position="50"/>
    </location>
</feature>
<feature type="turn" evidence="3">
    <location>
        <begin position="51"/>
        <end position="53"/>
    </location>
</feature>
<feature type="strand" evidence="3">
    <location>
        <begin position="56"/>
        <end position="67"/>
    </location>
</feature>
<feature type="strand" evidence="3">
    <location>
        <begin position="70"/>
        <end position="72"/>
    </location>
</feature>
<feature type="helix" evidence="3">
    <location>
        <begin position="76"/>
        <end position="82"/>
    </location>
</feature>
<feature type="helix" evidence="3">
    <location>
        <begin position="87"/>
        <end position="92"/>
    </location>
</feature>
<feature type="strand" evidence="3">
    <location>
        <begin position="99"/>
        <end position="103"/>
    </location>
</feature>
<feature type="helix" evidence="3">
    <location>
        <begin position="104"/>
        <end position="113"/>
    </location>
</feature>
<feature type="turn" evidence="3">
    <location>
        <begin position="118"/>
        <end position="120"/>
    </location>
</feature>
<feature type="strand" evidence="3">
    <location>
        <begin position="123"/>
        <end position="139"/>
    </location>
</feature>
<feature type="turn" evidence="3">
    <location>
        <begin position="146"/>
        <end position="148"/>
    </location>
</feature>
<feature type="helix" evidence="3">
    <location>
        <begin position="154"/>
        <end position="156"/>
    </location>
</feature>
<feature type="strand" evidence="3">
    <location>
        <begin position="157"/>
        <end position="159"/>
    </location>
</feature>
<feature type="helix" evidence="3">
    <location>
        <begin position="175"/>
        <end position="178"/>
    </location>
</feature>
<feature type="helix" evidence="3">
    <location>
        <begin position="180"/>
        <end position="187"/>
    </location>
</feature>
<feature type="strand" evidence="3">
    <location>
        <begin position="190"/>
        <end position="192"/>
    </location>
</feature>
<feature type="helix" evidence="3">
    <location>
        <begin position="196"/>
        <end position="204"/>
    </location>
</feature>
<feature type="helix" evidence="3">
    <location>
        <begin position="208"/>
        <end position="232"/>
    </location>
</feature>
<feature type="strand" evidence="3">
    <location>
        <begin position="236"/>
        <end position="241"/>
    </location>
</feature>
<feature type="turn" evidence="3">
    <location>
        <begin position="242"/>
        <end position="245"/>
    </location>
</feature>
<feature type="helix" evidence="3">
    <location>
        <begin position="249"/>
        <end position="258"/>
    </location>
</feature>
<feature type="helix" evidence="3">
    <location>
        <begin position="262"/>
        <end position="264"/>
    </location>
</feature>
<feature type="strand" evidence="3">
    <location>
        <begin position="267"/>
        <end position="270"/>
    </location>
</feature>
<feature type="helix" evidence="2">
    <location>
        <begin position="274"/>
        <end position="276"/>
    </location>
</feature>
<feature type="helix" evidence="3">
    <location>
        <begin position="277"/>
        <end position="291"/>
    </location>
</feature>
<keyword id="KW-0002">3D-structure</keyword>
<keyword id="KW-0067">ATP-binding</keyword>
<keyword id="KW-0119">Carbohydrate metabolism</keyword>
<keyword id="KW-0418">Kinase</keyword>
<keyword id="KW-0479">Metal-binding</keyword>
<keyword id="KW-0547">Nucleotide-binding</keyword>
<keyword id="KW-1185">Reference proteome</keyword>
<keyword id="KW-0808">Transferase</keyword>
<keyword id="KW-0862">Zinc</keyword>
<reference key="1">
    <citation type="journal article" date="2001" name="Proc. Natl. Acad. Sci. U.S.A.">
        <title>Complete genomic sequence of Pasteurella multocida Pm70.</title>
        <authorList>
            <person name="May B.J."/>
            <person name="Zhang Q."/>
            <person name="Li L.L."/>
            <person name="Paustian M.L."/>
            <person name="Whittam T.S."/>
            <person name="Kapur V."/>
        </authorList>
    </citation>
    <scope>NUCLEOTIDE SEQUENCE [LARGE SCALE GENOMIC DNA]</scope>
    <source>
        <strain>Pm70</strain>
    </source>
</reference>
<dbReference type="EC" id="2.7.1.60" evidence="1"/>
<dbReference type="EMBL" id="AE004439">
    <property type="protein sequence ID" value="AAK03796.1"/>
    <property type="molecule type" value="Genomic_DNA"/>
</dbReference>
<dbReference type="RefSeq" id="WP_010907298.1">
    <property type="nucleotide sequence ID" value="NC_002663.1"/>
</dbReference>
<dbReference type="PDB" id="6JDA">
    <property type="method" value="X-ray"/>
    <property type="resolution" value="2.90 A"/>
    <property type="chains" value="A=1-291"/>
</dbReference>
<dbReference type="PDB" id="6JDO">
    <property type="method" value="X-ray"/>
    <property type="resolution" value="2.00 A"/>
    <property type="chains" value="A/B=1-293"/>
</dbReference>
<dbReference type="PDBsum" id="6JDA"/>
<dbReference type="PDBsum" id="6JDO"/>
<dbReference type="SMR" id="Q9CKB3"/>
<dbReference type="STRING" id="272843.PM1712"/>
<dbReference type="EnsemblBacteria" id="AAK03796">
    <property type="protein sequence ID" value="AAK03796"/>
    <property type="gene ID" value="PM1712"/>
</dbReference>
<dbReference type="KEGG" id="pmu:PM1712"/>
<dbReference type="PATRIC" id="fig|272843.6.peg.1733"/>
<dbReference type="HOGENOM" id="CLU_036604_0_4_6"/>
<dbReference type="OrthoDB" id="8772678at2"/>
<dbReference type="UniPathway" id="UPA00629">
    <property type="reaction ID" value="UER00681"/>
</dbReference>
<dbReference type="Proteomes" id="UP000000809">
    <property type="component" value="Chromosome"/>
</dbReference>
<dbReference type="GO" id="GO:0005524">
    <property type="term" value="F:ATP binding"/>
    <property type="evidence" value="ECO:0007669"/>
    <property type="project" value="UniProtKB-UniRule"/>
</dbReference>
<dbReference type="GO" id="GO:0009384">
    <property type="term" value="F:N-acylmannosamine kinase activity"/>
    <property type="evidence" value="ECO:0007669"/>
    <property type="project" value="UniProtKB-UniRule"/>
</dbReference>
<dbReference type="GO" id="GO:0008270">
    <property type="term" value="F:zinc ion binding"/>
    <property type="evidence" value="ECO:0007669"/>
    <property type="project" value="UniProtKB-UniRule"/>
</dbReference>
<dbReference type="GO" id="GO:0019262">
    <property type="term" value="P:N-acetylneuraminate catabolic process"/>
    <property type="evidence" value="ECO:0007669"/>
    <property type="project" value="UniProtKB-UniRule"/>
</dbReference>
<dbReference type="CDD" id="cd24069">
    <property type="entry name" value="ASKHA_NBD_ROK_EcNanK-like"/>
    <property type="match status" value="1"/>
</dbReference>
<dbReference type="Gene3D" id="3.30.420.40">
    <property type="match status" value="2"/>
</dbReference>
<dbReference type="HAMAP" id="MF_01234">
    <property type="entry name" value="ManNAc_kinase"/>
    <property type="match status" value="1"/>
</dbReference>
<dbReference type="InterPro" id="IPR043129">
    <property type="entry name" value="ATPase_NBD"/>
</dbReference>
<dbReference type="InterPro" id="IPR023945">
    <property type="entry name" value="ManNAc_kinase_bac"/>
</dbReference>
<dbReference type="InterPro" id="IPR000600">
    <property type="entry name" value="ROK"/>
</dbReference>
<dbReference type="NCBIfam" id="NF003461">
    <property type="entry name" value="PRK05082.1"/>
    <property type="match status" value="1"/>
</dbReference>
<dbReference type="PANTHER" id="PTHR18964:SF169">
    <property type="entry name" value="N-ACETYLMANNOSAMINE KINASE"/>
    <property type="match status" value="1"/>
</dbReference>
<dbReference type="PANTHER" id="PTHR18964">
    <property type="entry name" value="ROK (REPRESSOR, ORF, KINASE) FAMILY"/>
    <property type="match status" value="1"/>
</dbReference>
<dbReference type="Pfam" id="PF00480">
    <property type="entry name" value="ROK"/>
    <property type="match status" value="1"/>
</dbReference>
<dbReference type="SUPFAM" id="SSF53067">
    <property type="entry name" value="Actin-like ATPase domain"/>
    <property type="match status" value="1"/>
</dbReference>
<proteinExistence type="evidence at protein level"/>
<protein>
    <recommendedName>
        <fullName evidence="1">N-acetylmannosamine kinase</fullName>
        <ecNumber evidence="1">2.7.1.60</ecNumber>
    </recommendedName>
    <alternativeName>
        <fullName evidence="1">ManNAc kinase</fullName>
    </alternativeName>
    <alternativeName>
        <fullName evidence="1">N-acetyl-D-mannosamine kinase</fullName>
    </alternativeName>
</protein>
<comment type="function">
    <text evidence="1">Catalyzes the phosphorylation of N-acetylmannosamine (ManNAc) to ManNAc-6-P.</text>
</comment>
<comment type="catalytic activity">
    <reaction evidence="1">
        <text>an N-acyl-D-mannosamine + ATP = an N-acyl-D-mannosamine 6-phosphate + ADP + H(+)</text>
        <dbReference type="Rhea" id="RHEA:23832"/>
        <dbReference type="ChEBI" id="CHEBI:15378"/>
        <dbReference type="ChEBI" id="CHEBI:16062"/>
        <dbReference type="ChEBI" id="CHEBI:30616"/>
        <dbReference type="ChEBI" id="CHEBI:57666"/>
        <dbReference type="ChEBI" id="CHEBI:456216"/>
        <dbReference type="EC" id="2.7.1.60"/>
    </reaction>
</comment>
<comment type="pathway">
    <text evidence="1">Amino-sugar metabolism; N-acetylneuraminate degradation; D-fructose 6-phosphate from N-acetylneuraminate: step 2/5.</text>
</comment>
<comment type="subunit">
    <text evidence="1">Homodimer.</text>
</comment>
<comment type="similarity">
    <text evidence="1">Belongs to the ROK (NagC/XylR) family. NanK subfamily.</text>
</comment>
<evidence type="ECO:0000255" key="1">
    <source>
        <dbReference type="HAMAP-Rule" id="MF_01234"/>
    </source>
</evidence>
<evidence type="ECO:0007829" key="2">
    <source>
        <dbReference type="PDB" id="6JDA"/>
    </source>
</evidence>
<evidence type="ECO:0007829" key="3">
    <source>
        <dbReference type="PDB" id="6JDO"/>
    </source>
</evidence>
<sequence length="297" mass="31351">MRCLALDIGGTKIASAIVTDGKIEQRQQIATPQADAANAMHDTLANILALYAGQFDYVAVASTGIINHGVLTALNPKNLGGLAEFPLKESIARHTDKPIGLLNDVQAAACAEYKDEDKNAVQNFVFITVSTGVGGGIILERRLLTEPNGVAGHIGHTLADPNGPVCGCGRVGCVEAVAAGRAIEAVSSQWNPPCTPKQAFELFRKNDEKATALIQRSASAIANLIADLVIGLDVQKVVVGGSVGLAEGYLPLVKQYLNMMPHFYHCTVEQARHGQDAGLLGAAWWVADCLKQGVHLK</sequence>
<organism>
    <name type="scientific">Pasteurella multocida (strain Pm70)</name>
    <dbReference type="NCBI Taxonomy" id="272843"/>
    <lineage>
        <taxon>Bacteria</taxon>
        <taxon>Pseudomonadati</taxon>
        <taxon>Pseudomonadota</taxon>
        <taxon>Gammaproteobacteria</taxon>
        <taxon>Pasteurellales</taxon>
        <taxon>Pasteurellaceae</taxon>
        <taxon>Pasteurella</taxon>
    </lineage>
</organism>
<gene>
    <name evidence="1" type="primary">nanK</name>
    <name type="ordered locus">PM1712</name>
</gene>
<name>NANK_PASMU</name>
<accession>Q9CKB3</accession>